<comment type="catalytic activity">
    <reaction evidence="2">
        <text>D-ribulose + ATP = D-ribulose 5-phosphate + ADP + H(+)</text>
        <dbReference type="Rhea" id="RHEA:17601"/>
        <dbReference type="ChEBI" id="CHEBI:15378"/>
        <dbReference type="ChEBI" id="CHEBI:17173"/>
        <dbReference type="ChEBI" id="CHEBI:30616"/>
        <dbReference type="ChEBI" id="CHEBI:58121"/>
        <dbReference type="ChEBI" id="CHEBI:456216"/>
        <dbReference type="EC" id="2.7.1.16"/>
    </reaction>
</comment>
<comment type="catalytic activity">
    <reaction evidence="2">
        <text>L-ribulose + ATP = L-ribulose 5-phosphate + ADP + H(+)</text>
        <dbReference type="Rhea" id="RHEA:22072"/>
        <dbReference type="ChEBI" id="CHEBI:15378"/>
        <dbReference type="ChEBI" id="CHEBI:16880"/>
        <dbReference type="ChEBI" id="CHEBI:30616"/>
        <dbReference type="ChEBI" id="CHEBI:58226"/>
        <dbReference type="ChEBI" id="CHEBI:456216"/>
        <dbReference type="EC" id="2.7.1.16"/>
    </reaction>
</comment>
<comment type="pathway">
    <text evidence="2">Carbohydrate degradation; L-arabinose degradation via L-ribulose; D-xylulose 5-phosphate from L-arabinose (bacterial route): step 2/3.</text>
</comment>
<comment type="similarity">
    <text evidence="2">Belongs to the ribulokinase family.</text>
</comment>
<protein>
    <recommendedName>
        <fullName evidence="2">Ribulokinase</fullName>
        <ecNumber evidence="2">2.7.1.16</ecNumber>
    </recommendedName>
</protein>
<gene>
    <name evidence="2" type="primary">araB</name>
    <name type="ordered locus">c0075</name>
</gene>
<keyword id="KW-0054">Arabinose catabolism</keyword>
<keyword id="KW-0067">ATP-binding</keyword>
<keyword id="KW-0119">Carbohydrate metabolism</keyword>
<keyword id="KW-0418">Kinase</keyword>
<keyword id="KW-0547">Nucleotide-binding</keyword>
<keyword id="KW-1185">Reference proteome</keyword>
<keyword id="KW-0808">Transferase</keyword>
<feature type="initiator methionine" description="Removed" evidence="1">
    <location>
        <position position="1"/>
    </location>
</feature>
<feature type="chain" id="PRO_0000198359" description="Ribulokinase">
    <location>
        <begin position="2"/>
        <end position="566"/>
    </location>
</feature>
<accession>Q8FL88</accession>
<evidence type="ECO:0000250" key="1"/>
<evidence type="ECO:0000255" key="2">
    <source>
        <dbReference type="HAMAP-Rule" id="MF_00520"/>
    </source>
</evidence>
<proteinExistence type="inferred from homology"/>
<dbReference type="EC" id="2.7.1.16" evidence="2"/>
<dbReference type="EMBL" id="AE014075">
    <property type="protein sequence ID" value="AAN78571.1"/>
    <property type="molecule type" value="Genomic_DNA"/>
</dbReference>
<dbReference type="RefSeq" id="WP_000951859.1">
    <property type="nucleotide sequence ID" value="NZ_CP051263.1"/>
</dbReference>
<dbReference type="SMR" id="Q8FL88"/>
<dbReference type="STRING" id="199310.c0075"/>
<dbReference type="KEGG" id="ecc:c0075"/>
<dbReference type="eggNOG" id="COG1069">
    <property type="taxonomic scope" value="Bacteria"/>
</dbReference>
<dbReference type="HOGENOM" id="CLU_009281_9_1_6"/>
<dbReference type="BioCyc" id="ECOL199310:C0075-MONOMER"/>
<dbReference type="UniPathway" id="UPA00145">
    <property type="reaction ID" value="UER00566"/>
</dbReference>
<dbReference type="Proteomes" id="UP000001410">
    <property type="component" value="Chromosome"/>
</dbReference>
<dbReference type="GO" id="GO:0005737">
    <property type="term" value="C:cytoplasm"/>
    <property type="evidence" value="ECO:0007669"/>
    <property type="project" value="TreeGrafter"/>
</dbReference>
<dbReference type="GO" id="GO:0005524">
    <property type="term" value="F:ATP binding"/>
    <property type="evidence" value="ECO:0007669"/>
    <property type="project" value="UniProtKB-KW"/>
</dbReference>
<dbReference type="GO" id="GO:0019150">
    <property type="term" value="F:D-ribulokinase activity"/>
    <property type="evidence" value="ECO:0007669"/>
    <property type="project" value="RHEA"/>
</dbReference>
<dbReference type="GO" id="GO:0008741">
    <property type="term" value="F:ribulokinase activity"/>
    <property type="evidence" value="ECO:0007669"/>
    <property type="project" value="UniProtKB-UniRule"/>
</dbReference>
<dbReference type="GO" id="GO:0019569">
    <property type="term" value="P:L-arabinose catabolic process to xylulose 5-phosphate"/>
    <property type="evidence" value="ECO:0007669"/>
    <property type="project" value="UniProtKB-UniRule"/>
</dbReference>
<dbReference type="CDD" id="cd07781">
    <property type="entry name" value="ASKHA_NBD_FGGY_L-RBK"/>
    <property type="match status" value="1"/>
</dbReference>
<dbReference type="Gene3D" id="1.20.58.2240">
    <property type="match status" value="1"/>
</dbReference>
<dbReference type="Gene3D" id="3.30.420.40">
    <property type="match status" value="1"/>
</dbReference>
<dbReference type="HAMAP" id="MF_00520">
    <property type="entry name" value="Ribulokinase"/>
    <property type="match status" value="1"/>
</dbReference>
<dbReference type="InterPro" id="IPR043129">
    <property type="entry name" value="ATPase_NBD"/>
</dbReference>
<dbReference type="InterPro" id="IPR018485">
    <property type="entry name" value="FGGY_C"/>
</dbReference>
<dbReference type="InterPro" id="IPR005929">
    <property type="entry name" value="Ribulokinase"/>
</dbReference>
<dbReference type="NCBIfam" id="TIGR01234">
    <property type="entry name" value="L-ribulokinase"/>
    <property type="match status" value="1"/>
</dbReference>
<dbReference type="NCBIfam" id="NF003154">
    <property type="entry name" value="PRK04123.1"/>
    <property type="match status" value="1"/>
</dbReference>
<dbReference type="PANTHER" id="PTHR43435:SF4">
    <property type="entry name" value="FGGY CARBOHYDRATE KINASE DOMAIN-CONTAINING PROTEIN"/>
    <property type="match status" value="1"/>
</dbReference>
<dbReference type="PANTHER" id="PTHR43435">
    <property type="entry name" value="RIBULOKINASE"/>
    <property type="match status" value="1"/>
</dbReference>
<dbReference type="Pfam" id="PF02782">
    <property type="entry name" value="FGGY_C"/>
    <property type="match status" value="1"/>
</dbReference>
<dbReference type="SUPFAM" id="SSF53067">
    <property type="entry name" value="Actin-like ATPase domain"/>
    <property type="match status" value="2"/>
</dbReference>
<organism>
    <name type="scientific">Escherichia coli O6:H1 (strain CFT073 / ATCC 700928 / UPEC)</name>
    <dbReference type="NCBI Taxonomy" id="199310"/>
    <lineage>
        <taxon>Bacteria</taxon>
        <taxon>Pseudomonadati</taxon>
        <taxon>Pseudomonadota</taxon>
        <taxon>Gammaproteobacteria</taxon>
        <taxon>Enterobacterales</taxon>
        <taxon>Enterobacteriaceae</taxon>
        <taxon>Escherichia</taxon>
    </lineage>
</organism>
<sequence length="566" mass="61279">MAIAIGLDFGSDSVRALAVDCATGEEIATSVEWYPRWQNGQFCDAPNNQFRHHPRDYIESMEAALKTVLAELSVEQRAAVVGIGVDTTGSTPAPIDADGNVLALRPEFAENPNAMFVLWKDHTAVEEAEEITRLCHAPGNVDYSRYIGGIYSSEWFWAKILHITRQDNAVAQSAASWIELCDWVPALLSGTTRPQDIRRGRCSAGHKSLWHESWGGLPPASFFDELDPILNRHLPSPLFTETWTADIPVGTLCPEWAQRLGLPESVVISGGAFDCHMGAVGAGAQPNALVKVIGTSTCDILIADKQSVGERAVKGICGQVDGSVVPGFIGLEAGQSAFGDIYAWFGRVLGWPLEQLAAQHPELKEQINASQKQLLPALTEAWAKNPSLDHLPVVLDWFNGRRTPNANQRLKGVITDLNLATDAPLLFGGLIAATAFGARAIMECFTAQGIAVNNVMALGGIARKNQVIMQACCDVLNRPLQIVASDQCCALGAAIFAAVAAKVHADIPSAQQKMASAVEKTLQPRNEQAQRFEQLYRRYQQWAMSAEQHYLPTSAPAQADQAVPTL</sequence>
<name>ARAB_ECOL6</name>
<reference key="1">
    <citation type="journal article" date="2002" name="Proc. Natl. Acad. Sci. U.S.A.">
        <title>Extensive mosaic structure revealed by the complete genome sequence of uropathogenic Escherichia coli.</title>
        <authorList>
            <person name="Welch R.A."/>
            <person name="Burland V."/>
            <person name="Plunkett G. III"/>
            <person name="Redford P."/>
            <person name="Roesch P."/>
            <person name="Rasko D."/>
            <person name="Buckles E.L."/>
            <person name="Liou S.-R."/>
            <person name="Boutin A."/>
            <person name="Hackett J."/>
            <person name="Stroud D."/>
            <person name="Mayhew G.F."/>
            <person name="Rose D.J."/>
            <person name="Zhou S."/>
            <person name="Schwartz D.C."/>
            <person name="Perna N.T."/>
            <person name="Mobley H.L.T."/>
            <person name="Donnenberg M.S."/>
            <person name="Blattner F.R."/>
        </authorList>
    </citation>
    <scope>NUCLEOTIDE SEQUENCE [LARGE SCALE GENOMIC DNA]</scope>
    <source>
        <strain>CFT073 / ATCC 700928 / UPEC</strain>
    </source>
</reference>